<evidence type="ECO:0000250" key="1"/>
<evidence type="ECO:0000255" key="2"/>
<evidence type="ECO:0000256" key="3">
    <source>
        <dbReference type="SAM" id="MobiDB-lite"/>
    </source>
</evidence>
<evidence type="ECO:0000305" key="4"/>
<evidence type="ECO:0007829" key="5">
    <source>
        <dbReference type="PDB" id="6IJO"/>
    </source>
</evidence>
<evidence type="ECO:0007829" key="6">
    <source>
        <dbReference type="PDB" id="7D0J"/>
    </source>
</evidence>
<evidence type="ECO:0007829" key="7">
    <source>
        <dbReference type="PDB" id="7DZ7"/>
    </source>
</evidence>
<evidence type="ECO:0007829" key="8">
    <source>
        <dbReference type="PDB" id="7DZ8"/>
    </source>
</evidence>
<evidence type="ECO:0007829" key="9">
    <source>
        <dbReference type="PDB" id="8H2U"/>
    </source>
</evidence>
<accession>P13352</accession>
<gene>
    <name type="primary">PSAH</name>
</gene>
<keyword id="KW-0002">3D-structure</keyword>
<keyword id="KW-0150">Chloroplast</keyword>
<keyword id="KW-0472">Membrane</keyword>
<keyword id="KW-0602">Photosynthesis</keyword>
<keyword id="KW-0603">Photosystem I</keyword>
<keyword id="KW-0934">Plastid</keyword>
<keyword id="KW-0793">Thylakoid</keyword>
<keyword id="KW-0809">Transit peptide</keyword>
<keyword id="KW-0812">Transmembrane</keyword>
<keyword id="KW-1133">Transmembrane helix</keyword>
<proteinExistence type="evidence at protein level"/>
<feature type="transit peptide" description="Chloroplast">
    <location>
        <begin position="1"/>
        <end position="30"/>
    </location>
</feature>
<feature type="chain" id="PRO_0000029415" description="Photosystem I reaction center subunit VI, chloroplastic">
    <location>
        <begin position="31"/>
        <end position="130"/>
    </location>
</feature>
<feature type="transmembrane region" description="Helical" evidence="2">
    <location>
        <begin position="85"/>
        <end position="103"/>
    </location>
</feature>
<feature type="region of interest" description="Disordered" evidence="3">
    <location>
        <begin position="105"/>
        <end position="130"/>
    </location>
</feature>
<feature type="turn" evidence="8">
    <location>
        <begin position="33"/>
        <end position="36"/>
    </location>
</feature>
<feature type="strand" evidence="9">
    <location>
        <begin position="41"/>
        <end position="43"/>
    </location>
</feature>
<feature type="helix" evidence="7">
    <location>
        <begin position="44"/>
        <end position="48"/>
    </location>
</feature>
<feature type="strand" evidence="6">
    <location>
        <begin position="51"/>
        <end position="54"/>
    </location>
</feature>
<feature type="helix" evidence="7">
    <location>
        <begin position="64"/>
        <end position="73"/>
    </location>
</feature>
<feature type="turn" evidence="7">
    <location>
        <begin position="74"/>
        <end position="77"/>
    </location>
</feature>
<feature type="helix" evidence="7">
    <location>
        <begin position="80"/>
        <end position="100"/>
    </location>
</feature>
<feature type="helix" evidence="7">
    <location>
        <begin position="102"/>
        <end position="105"/>
    </location>
</feature>
<feature type="helix" evidence="7">
    <location>
        <begin position="109"/>
        <end position="112"/>
    </location>
</feature>
<feature type="strand" evidence="8">
    <location>
        <begin position="119"/>
        <end position="121"/>
    </location>
</feature>
<feature type="strand" evidence="5">
    <location>
        <begin position="122"/>
        <end position="124"/>
    </location>
</feature>
<feature type="strand" evidence="7">
    <location>
        <begin position="125"/>
        <end position="127"/>
    </location>
</feature>
<dbReference type="EMBL" id="X15164">
    <property type="protein sequence ID" value="CAA33256.1"/>
    <property type="molecule type" value="mRNA"/>
</dbReference>
<dbReference type="PIR" id="JQ0370">
    <property type="entry name" value="JQ0370"/>
</dbReference>
<dbReference type="RefSeq" id="XP_001690629.1">
    <property type="nucleotide sequence ID" value="XM_001690577.1"/>
</dbReference>
<dbReference type="PDB" id="6IJO">
    <property type="method" value="EM"/>
    <property type="resolution" value="3.30 A"/>
    <property type="chains" value="H=1-130"/>
</dbReference>
<dbReference type="PDB" id="7D0J">
    <property type="method" value="EM"/>
    <property type="resolution" value="3.42 A"/>
    <property type="chains" value="H=31-130"/>
</dbReference>
<dbReference type="PDB" id="7DZ7">
    <property type="method" value="EM"/>
    <property type="resolution" value="2.84 A"/>
    <property type="chains" value="H=1-130"/>
</dbReference>
<dbReference type="PDB" id="7DZ8">
    <property type="method" value="EM"/>
    <property type="resolution" value="3.16 A"/>
    <property type="chains" value="H=1-130"/>
</dbReference>
<dbReference type="PDB" id="8H2U">
    <property type="method" value="X-ray"/>
    <property type="resolution" value="3.40 A"/>
    <property type="chains" value="H=1-130"/>
</dbReference>
<dbReference type="PDBsum" id="6IJO"/>
<dbReference type="PDBsum" id="7D0J"/>
<dbReference type="PDBsum" id="7DZ7"/>
<dbReference type="PDBsum" id="7DZ8"/>
<dbReference type="PDBsum" id="8H2U"/>
<dbReference type="EMDB" id="EMD-30536"/>
<dbReference type="EMDB" id="EMD-30925"/>
<dbReference type="EMDB" id="EMD-30926"/>
<dbReference type="SMR" id="P13352"/>
<dbReference type="IntAct" id="P13352">
    <property type="interactions" value="1"/>
</dbReference>
<dbReference type="PaxDb" id="3055-EDP05888"/>
<dbReference type="ProMEX" id="P13352"/>
<dbReference type="EnsemblPlants" id="PNW80804">
    <property type="protein sequence ID" value="PNW80804"/>
    <property type="gene ID" value="CHLRE_07g330250v5"/>
</dbReference>
<dbReference type="Gramene" id="PNW80804">
    <property type="protein sequence ID" value="PNW80804"/>
    <property type="gene ID" value="CHLRE_07g330250v5"/>
</dbReference>
<dbReference type="KEGG" id="cre:CHLRE_07g330250v5"/>
<dbReference type="eggNOG" id="ENOG502S8YQ">
    <property type="taxonomic scope" value="Eukaryota"/>
</dbReference>
<dbReference type="HOGENOM" id="CLU_152855_1_0_1"/>
<dbReference type="OMA" id="DMENTTG"/>
<dbReference type="OrthoDB" id="496139at2759"/>
<dbReference type="BioCyc" id="CHLAMY:CHLREDRAFT_182959-MONOMER"/>
<dbReference type="BioCyc" id="MetaCyc:CHLREDRAFT_182959-MONOMER"/>
<dbReference type="GO" id="GO:0009535">
    <property type="term" value="C:chloroplast thylakoid membrane"/>
    <property type="evidence" value="ECO:0007669"/>
    <property type="project" value="UniProtKB-SubCell"/>
</dbReference>
<dbReference type="GO" id="GO:0009538">
    <property type="term" value="C:photosystem I reaction center"/>
    <property type="evidence" value="ECO:0007669"/>
    <property type="project" value="InterPro"/>
</dbReference>
<dbReference type="GO" id="GO:0015979">
    <property type="term" value="P:photosynthesis"/>
    <property type="evidence" value="ECO:0007669"/>
    <property type="project" value="UniProtKB-KW"/>
</dbReference>
<dbReference type="InterPro" id="IPR004928">
    <property type="entry name" value="PSI_PsaH"/>
</dbReference>
<dbReference type="PANTHER" id="PTHR34787">
    <property type="entry name" value="PHOTOSYSTEM I REACTION CENTER SUBUNIT VI-2, CHLOROPLASTIC"/>
    <property type="match status" value="1"/>
</dbReference>
<dbReference type="PANTHER" id="PTHR34787:SF1">
    <property type="entry name" value="PHOTOSYSTEM I REACTION CENTER SUBUNIT VI-2, CHLOROPLASTIC"/>
    <property type="match status" value="1"/>
</dbReference>
<dbReference type="Pfam" id="PF03244">
    <property type="entry name" value="PSI_PsaH"/>
    <property type="match status" value="1"/>
</dbReference>
<name>PSAH_CHLRE</name>
<organism>
    <name type="scientific">Chlamydomonas reinhardtii</name>
    <name type="common">Chlamydomonas smithii</name>
    <dbReference type="NCBI Taxonomy" id="3055"/>
    <lineage>
        <taxon>Eukaryota</taxon>
        <taxon>Viridiplantae</taxon>
        <taxon>Chlorophyta</taxon>
        <taxon>core chlorophytes</taxon>
        <taxon>Chlorophyceae</taxon>
        <taxon>CS clade</taxon>
        <taxon>Chlamydomonadales</taxon>
        <taxon>Chlamydomonadaceae</taxon>
        <taxon>Chlamydomonas</taxon>
    </lineage>
</organism>
<reference key="1">
    <citation type="journal article" date="1989" name="Mol. Gen. Genet.">
        <title>Isolation and characterization of cDNA clones encoding photosystem I subunits with molecular masses 11.0, 10.0 and 8.4 kDa from Chlamydomonas reinhardtii.</title>
        <authorList>
            <person name="Franzen L.-G."/>
            <person name="Frank G."/>
            <person name="Zuber H."/>
            <person name="Rochaix J.-D."/>
        </authorList>
    </citation>
    <scope>NUCLEOTIDE SEQUENCE [MRNA]</scope>
    <source>
        <strain>137c / CC-125</strain>
    </source>
</reference>
<sequence>MALVARPVLSARVAASRPRVAARKAVRVSAKYGENSRYFDLQDMENTTGSWDMYGVDEKKRYPDNQAKFFTQATDIISRRESLRALVALSGIAAIVTYGLKGAKDADLPITKGPQTTGENGKGGSVRSRL</sequence>
<protein>
    <recommendedName>
        <fullName>Photosystem I reaction center subunit VI, chloroplastic</fullName>
        <shortName>PSI-H</shortName>
    </recommendedName>
    <alternativeName>
        <fullName>Light-harvesting complex I 11 kDa protein</fullName>
    </alternativeName>
    <alternativeName>
        <fullName>P28 protein</fullName>
    </alternativeName>
</protein>
<comment type="function">
    <text>Possible role could be the docking of the LHC I antenna complex to the core complex.</text>
</comment>
<comment type="subcellular location">
    <subcellularLocation>
        <location evidence="1">Plastid</location>
        <location evidence="1">Chloroplast thylakoid membrane</location>
        <topology evidence="1">Single-pass membrane protein</topology>
    </subcellularLocation>
</comment>
<comment type="similarity">
    <text evidence="4">Belongs to the psaH family.</text>
</comment>